<accession>O42400</accession>
<feature type="chain" id="PRO_0000220891" description="Axin-1">
    <location>
        <begin position="1"/>
        <end position="841"/>
    </location>
</feature>
<feature type="domain" description="RGS" evidence="5">
    <location>
        <begin position="88"/>
        <end position="211"/>
    </location>
</feature>
<feature type="domain" description="DIX" evidence="4">
    <location>
        <begin position="759"/>
        <end position="841"/>
    </location>
</feature>
<feature type="region of interest" description="Disordered" evidence="6">
    <location>
        <begin position="1"/>
        <end position="78"/>
    </location>
</feature>
<feature type="region of interest" description="Disordered" evidence="6">
    <location>
        <begin position="217"/>
        <end position="269"/>
    </location>
</feature>
<feature type="region of interest" description="Interaction with GSK3B" evidence="1">
    <location>
        <begin position="348"/>
        <end position="433"/>
    </location>
</feature>
<feature type="region of interest" description="Interaction with beta-catenin" evidence="1">
    <location>
        <begin position="434"/>
        <end position="508"/>
    </location>
</feature>
<feature type="region of interest" description="Disordered" evidence="6">
    <location>
        <begin position="482"/>
        <end position="527"/>
    </location>
</feature>
<feature type="region of interest" description="Disordered" evidence="6">
    <location>
        <begin position="613"/>
        <end position="635"/>
    </location>
</feature>
<feature type="region of interest" description="Disordered" evidence="6">
    <location>
        <begin position="727"/>
        <end position="756"/>
    </location>
</feature>
<feature type="compositionally biased region" description="Polar residues" evidence="6">
    <location>
        <begin position="44"/>
        <end position="61"/>
    </location>
</feature>
<feature type="compositionally biased region" description="Basic and acidic residues" evidence="6">
    <location>
        <begin position="248"/>
        <end position="259"/>
    </location>
</feature>
<feature type="compositionally biased region" description="Basic and acidic residues" evidence="6">
    <location>
        <begin position="727"/>
        <end position="736"/>
    </location>
</feature>
<keyword id="KW-0013">ADP-ribosylation</keyword>
<keyword id="KW-1003">Cell membrane</keyword>
<keyword id="KW-0963">Cytoplasm</keyword>
<keyword id="KW-0217">Developmental protein</keyword>
<keyword id="KW-0472">Membrane</keyword>
<keyword id="KW-0539">Nucleus</keyword>
<keyword id="KW-0597">Phosphoprotein</keyword>
<keyword id="KW-1185">Reference proteome</keyword>
<keyword id="KW-0832">Ubl conjugation</keyword>
<keyword id="KW-0879">Wnt signaling pathway</keyword>
<dbReference type="EMBL" id="AF009012">
    <property type="protein sequence ID" value="AAC60245.1"/>
    <property type="molecule type" value="mRNA"/>
</dbReference>
<dbReference type="RefSeq" id="NP_990275.1">
    <property type="nucleotide sequence ID" value="NM_204944.2"/>
</dbReference>
<dbReference type="SMR" id="O42400"/>
<dbReference type="ELM" id="O42400"/>
<dbReference type="FunCoup" id="O42400">
    <property type="interactions" value="1720"/>
</dbReference>
<dbReference type="STRING" id="9031.ENSGALP00000074022"/>
<dbReference type="GlyGen" id="O42400">
    <property type="glycosylation" value="1 site"/>
</dbReference>
<dbReference type="PaxDb" id="9031-ENSGALP00000041347"/>
<dbReference type="GeneID" id="395786"/>
<dbReference type="KEGG" id="gga:395786"/>
<dbReference type="CTD" id="8312"/>
<dbReference type="VEuPathDB" id="HostDB:geneid_395786"/>
<dbReference type="eggNOG" id="KOG3589">
    <property type="taxonomic scope" value="Eukaryota"/>
</dbReference>
<dbReference type="InParanoid" id="O42400"/>
<dbReference type="OrthoDB" id="10007451at2759"/>
<dbReference type="PhylomeDB" id="O42400"/>
<dbReference type="PRO" id="PR:O42400"/>
<dbReference type="Proteomes" id="UP000000539">
    <property type="component" value="Unassembled WGS sequence"/>
</dbReference>
<dbReference type="GO" id="GO:0030877">
    <property type="term" value="C:beta-catenin destruction complex"/>
    <property type="evidence" value="ECO:0000318"/>
    <property type="project" value="GO_Central"/>
</dbReference>
<dbReference type="GO" id="GO:0005737">
    <property type="term" value="C:cytoplasm"/>
    <property type="evidence" value="ECO:0000250"/>
    <property type="project" value="AgBase"/>
</dbReference>
<dbReference type="GO" id="GO:0031410">
    <property type="term" value="C:cytoplasmic vesicle"/>
    <property type="evidence" value="ECO:0000250"/>
    <property type="project" value="AgBase"/>
</dbReference>
<dbReference type="GO" id="GO:0005634">
    <property type="term" value="C:nucleus"/>
    <property type="evidence" value="ECO:0000318"/>
    <property type="project" value="GO_Central"/>
</dbReference>
<dbReference type="GO" id="GO:0005886">
    <property type="term" value="C:plasma membrane"/>
    <property type="evidence" value="ECO:0000318"/>
    <property type="project" value="GO_Central"/>
</dbReference>
<dbReference type="GO" id="GO:0008013">
    <property type="term" value="F:beta-catenin binding"/>
    <property type="evidence" value="ECO:0000250"/>
    <property type="project" value="AgBase"/>
</dbReference>
<dbReference type="GO" id="GO:0070411">
    <property type="term" value="F:I-SMAD binding"/>
    <property type="evidence" value="ECO:0000318"/>
    <property type="project" value="GO_Central"/>
</dbReference>
<dbReference type="GO" id="GO:0042802">
    <property type="term" value="F:identical protein binding"/>
    <property type="evidence" value="ECO:0000318"/>
    <property type="project" value="GO_Central"/>
</dbReference>
<dbReference type="GO" id="GO:0060090">
    <property type="term" value="F:molecular adaptor activity"/>
    <property type="evidence" value="ECO:0000318"/>
    <property type="project" value="GO_Central"/>
</dbReference>
<dbReference type="GO" id="GO:0042803">
    <property type="term" value="F:protein homodimerization activity"/>
    <property type="evidence" value="ECO:0000250"/>
    <property type="project" value="UniProtKB"/>
</dbReference>
<dbReference type="GO" id="GO:0019901">
    <property type="term" value="F:protein kinase binding"/>
    <property type="evidence" value="ECO:0000318"/>
    <property type="project" value="GO_Central"/>
</dbReference>
<dbReference type="GO" id="GO:0031625">
    <property type="term" value="F:ubiquitin protein ligase binding"/>
    <property type="evidence" value="ECO:0000318"/>
    <property type="project" value="GO_Central"/>
</dbReference>
<dbReference type="GO" id="GO:0048468">
    <property type="term" value="P:cell development"/>
    <property type="evidence" value="ECO:0000318"/>
    <property type="project" value="GO_Central"/>
</dbReference>
<dbReference type="GO" id="GO:0090090">
    <property type="term" value="P:negative regulation of canonical Wnt signaling pathway"/>
    <property type="evidence" value="ECO:0000318"/>
    <property type="project" value="GO_Central"/>
</dbReference>
<dbReference type="GO" id="GO:0046330">
    <property type="term" value="P:positive regulation of JNK cascade"/>
    <property type="evidence" value="ECO:0000250"/>
    <property type="project" value="UniProtKB"/>
</dbReference>
<dbReference type="GO" id="GO:0032436">
    <property type="term" value="P:positive regulation of proteasomal ubiquitin-dependent protein catabolic process"/>
    <property type="evidence" value="ECO:0000318"/>
    <property type="project" value="GO_Central"/>
</dbReference>
<dbReference type="GO" id="GO:0016055">
    <property type="term" value="P:Wnt signaling pathway"/>
    <property type="evidence" value="ECO:0007669"/>
    <property type="project" value="UniProtKB-KW"/>
</dbReference>
<dbReference type="CDD" id="cd11582">
    <property type="entry name" value="Axin_TNKS_binding"/>
    <property type="match status" value="1"/>
</dbReference>
<dbReference type="CDD" id="cd08707">
    <property type="entry name" value="RGS_Axin"/>
    <property type="match status" value="1"/>
</dbReference>
<dbReference type="FunFam" id="1.10.167.10:FF:000003">
    <property type="entry name" value="Axin 1"/>
    <property type="match status" value="1"/>
</dbReference>
<dbReference type="FunFam" id="1.10.196.10:FF:000002">
    <property type="entry name" value="Axin 1"/>
    <property type="match status" value="1"/>
</dbReference>
<dbReference type="FunFam" id="2.40.240.130:FF:000002">
    <property type="entry name" value="Axin 1"/>
    <property type="match status" value="1"/>
</dbReference>
<dbReference type="Gene3D" id="1.10.196.10">
    <property type="match status" value="2"/>
</dbReference>
<dbReference type="Gene3D" id="2.40.240.130">
    <property type="match status" value="1"/>
</dbReference>
<dbReference type="Gene3D" id="1.10.167.10">
    <property type="entry name" value="Regulator of G-protein Signalling 4, domain 2"/>
    <property type="match status" value="1"/>
</dbReference>
<dbReference type="InterPro" id="IPR043581">
    <property type="entry name" value="Axin-like"/>
</dbReference>
<dbReference type="InterPro" id="IPR014936">
    <property type="entry name" value="Axin_b-cat-bd"/>
</dbReference>
<dbReference type="InterPro" id="IPR032101">
    <property type="entry name" value="Axin_TNKS-bd"/>
</dbReference>
<dbReference type="InterPro" id="IPR001158">
    <property type="entry name" value="DIX"/>
</dbReference>
<dbReference type="InterPro" id="IPR038207">
    <property type="entry name" value="DIX_dom_sf"/>
</dbReference>
<dbReference type="InterPro" id="IPR016137">
    <property type="entry name" value="RGS"/>
</dbReference>
<dbReference type="InterPro" id="IPR036305">
    <property type="entry name" value="RGS_sf"/>
</dbReference>
<dbReference type="InterPro" id="IPR024066">
    <property type="entry name" value="RGS_subdom1/3"/>
</dbReference>
<dbReference type="InterPro" id="IPR044926">
    <property type="entry name" value="RGS_subdomain_2"/>
</dbReference>
<dbReference type="InterPro" id="IPR029071">
    <property type="entry name" value="Ubiquitin-like_domsf"/>
</dbReference>
<dbReference type="PANTHER" id="PTHR46102">
    <property type="entry name" value="AXIN"/>
    <property type="match status" value="1"/>
</dbReference>
<dbReference type="PANTHER" id="PTHR46102:SF3">
    <property type="entry name" value="AXIN-1"/>
    <property type="match status" value="1"/>
</dbReference>
<dbReference type="Pfam" id="PF16646">
    <property type="entry name" value="AXIN1_TNKS_BD"/>
    <property type="match status" value="1"/>
</dbReference>
<dbReference type="Pfam" id="PF08833">
    <property type="entry name" value="Axin_b-cat_bind"/>
    <property type="match status" value="1"/>
</dbReference>
<dbReference type="Pfam" id="PF00778">
    <property type="entry name" value="DIX"/>
    <property type="match status" value="1"/>
</dbReference>
<dbReference type="Pfam" id="PF00615">
    <property type="entry name" value="RGS"/>
    <property type="match status" value="1"/>
</dbReference>
<dbReference type="PRINTS" id="PR01301">
    <property type="entry name" value="RGSPROTEIN"/>
</dbReference>
<dbReference type="SMART" id="SM00021">
    <property type="entry name" value="DAX"/>
    <property type="match status" value="1"/>
</dbReference>
<dbReference type="SMART" id="SM00315">
    <property type="entry name" value="RGS"/>
    <property type="match status" value="1"/>
</dbReference>
<dbReference type="SUPFAM" id="SSF48097">
    <property type="entry name" value="Regulator of G-protein signaling, RGS"/>
    <property type="match status" value="1"/>
</dbReference>
<dbReference type="SUPFAM" id="SSF54236">
    <property type="entry name" value="Ubiquitin-like"/>
    <property type="match status" value="1"/>
</dbReference>
<dbReference type="PROSITE" id="PS50841">
    <property type="entry name" value="DIX"/>
    <property type="match status" value="1"/>
</dbReference>
<dbReference type="PROSITE" id="PS50132">
    <property type="entry name" value="RGS"/>
    <property type="match status" value="1"/>
</dbReference>
<name>AXIN1_CHICK</name>
<organism>
    <name type="scientific">Gallus gallus</name>
    <name type="common">Chicken</name>
    <dbReference type="NCBI Taxonomy" id="9031"/>
    <lineage>
        <taxon>Eukaryota</taxon>
        <taxon>Metazoa</taxon>
        <taxon>Chordata</taxon>
        <taxon>Craniata</taxon>
        <taxon>Vertebrata</taxon>
        <taxon>Euteleostomi</taxon>
        <taxon>Archelosauria</taxon>
        <taxon>Archosauria</taxon>
        <taxon>Dinosauria</taxon>
        <taxon>Saurischia</taxon>
        <taxon>Theropoda</taxon>
        <taxon>Coelurosauria</taxon>
        <taxon>Aves</taxon>
        <taxon>Neognathae</taxon>
        <taxon>Galloanserae</taxon>
        <taxon>Galliformes</taxon>
        <taxon>Phasianidae</taxon>
        <taxon>Phasianinae</taxon>
        <taxon>Gallus</taxon>
    </lineage>
</organism>
<proteinExistence type="evidence at transcript level"/>
<gene>
    <name type="primary">AXIN1</name>
    <name type="synonym">AXIN</name>
    <name type="synonym">AXN</name>
</gene>
<reference key="1">
    <citation type="journal article" date="1997" name="Cell">
        <title>The mouse Fused locus encodes Axin, an inhibitor of the Wnt signaling pathway that regulates embryonic axis formation.</title>
        <authorList>
            <person name="Zeng L."/>
            <person name="Fagotto F."/>
            <person name="Zhang T."/>
            <person name="Hsu W."/>
            <person name="Vasicek T.J."/>
            <person name="Perry W.L. III"/>
            <person name="Lee J.J."/>
            <person name="Tilghman S.M."/>
            <person name="Gumbiner B.M."/>
            <person name="Costantini F."/>
        </authorList>
    </citation>
    <scope>NUCLEOTIDE SEQUENCE [MRNA]</scope>
    <scope>DEVELOPMENTAL STAGE</scope>
    <source>
        <tissue>Embryo</tissue>
    </source>
</reference>
<protein>
    <recommendedName>
        <fullName>Axin-1</fullName>
    </recommendedName>
    <alternativeName>
        <fullName>Axis inhibition protein 1</fullName>
    </alternativeName>
</protein>
<comment type="function">
    <text evidence="2">Component of the beta-catenin destruction complex required for regulating CTNNB1 levels through phosphorylation and ubiquitination, and modulating Wnt-signaling. Controls dorsoventral patterning via two opposing effects; down-regulates CTNNB1 to inhibit the Wnt signaling pathway and ventralize embryos, but also dorsalizes embryos by activating a Wnt-independent JNK signaling pathway.</text>
</comment>
<comment type="subunit">
    <text evidence="3">Homodimer.</text>
</comment>
<comment type="subcellular location">
    <subcellularLocation>
        <location evidence="2">Cytoplasm</location>
    </subcellularLocation>
    <subcellularLocation>
        <location evidence="2">Nucleus</location>
    </subcellularLocation>
    <subcellularLocation>
        <location evidence="3">Membrane</location>
    </subcellularLocation>
    <subcellularLocation>
        <location evidence="3">Cell membrane</location>
    </subcellularLocation>
</comment>
<comment type="developmental stage">
    <text evidence="7">Expressed at stage 12 to 15.</text>
</comment>
<comment type="PTM">
    <text evidence="2">ADP-ribosylated by tankyrase TNKS and TNKS2. Poly-ADP-ribosylated protein is recognized by RNF146, followed by ubiquitination at 'Lys-48' and subsequent activation of the Wnt signaling pathway.</text>
</comment>
<comment type="PTM">
    <text evidence="2">Ubiquitinated by RNF146 when poly-ADP-ribosylated, leading to its degradation and subsequent activation of the Wnt signaling pathway.</text>
</comment>
<sequence length="841" mass="94932">MNIQGKGFPLDLGRSFTEDAPRPPVPGEEGELVSTDPRPVSHGFYSSKSDAVRNETSTATPRRSDLDLGYEPEGSASPTPPYLKWAESLHSLLDDQDGINLFRTFLKQEDCADLLDFWFACSGFRKLEPCVSNEEKRLKLAKAIYKKYILDNNGIVSRQIKPATKSFIKDCVMKLQIDPDMFDQAQTEIQCMIEDNTYPLFLKSDIYLEYTRTGGESPKIYSDPSSGSGTGKGLPGYLPTLNEDEEWKCDQDTEPEASRDSAPSSRLTQKLLLETATQRATSTRRYSEGREFRHGSWREPVNPYYVNTGYAMAPATSANDSEQQSMSSDADTMSLTDSSIDGIPPYRLRKQHRREMQESAKANGRVPLPHIPRTYRMPKDIHVEPEKFAAELINRLEEVQKEREAEEKLEERLKRVRAEEEGEDADISSGPSVISHKMPSAQPFHHFAPRYSEMGCAGMQMRDAHEENPESILDEHVQRVMKTPGCQSPGPGRHSPKPRSPESGHLGKLSGTLGTIPPGHGKHTTKSGMKLDAANLYHHKHVYHHIHHHSMMKPKEQIEAEATQRVQNSFAWNVDSHNYATKSRNYSENLGMAPVPMDSLGYSGKASLLSKRNIKKTDSGKSDGANYEMPGSPEDVERNQKILQWIIEGEKEISRHKKTNHGSSGVKKQLSHDMVRPLSIERPVAVHPWVSAQLRNVVQPSHPFIQDPTMPPNPAPNPLTQLEEARRRLEEEEKRAGKLPLKQRLKPQKRPGSGASQPCENIVVAYYFCGEPIPYRTLVKGRVVTLGQFKELLTKKGNYRYYFKKVSDEFDCGVVFEEVREDDTILPIFEEKIIGKVEKID</sequence>
<evidence type="ECO:0000250" key="1"/>
<evidence type="ECO:0000250" key="2">
    <source>
        <dbReference type="UniProtKB" id="O15169"/>
    </source>
</evidence>
<evidence type="ECO:0000250" key="3">
    <source>
        <dbReference type="UniProtKB" id="O35625"/>
    </source>
</evidence>
<evidence type="ECO:0000255" key="4">
    <source>
        <dbReference type="PROSITE-ProRule" id="PRU00069"/>
    </source>
</evidence>
<evidence type="ECO:0000255" key="5">
    <source>
        <dbReference type="PROSITE-ProRule" id="PRU00171"/>
    </source>
</evidence>
<evidence type="ECO:0000256" key="6">
    <source>
        <dbReference type="SAM" id="MobiDB-lite"/>
    </source>
</evidence>
<evidence type="ECO:0000269" key="7">
    <source>
    </source>
</evidence>